<organism>
    <name type="scientific">Vibrio alginolyticus</name>
    <dbReference type="NCBI Taxonomy" id="663"/>
    <lineage>
        <taxon>Bacteria</taxon>
        <taxon>Pseudomonadati</taxon>
        <taxon>Pseudomonadota</taxon>
        <taxon>Gammaproteobacteria</taxon>
        <taxon>Vibrionales</taxon>
        <taxon>Vibrionaceae</taxon>
        <taxon>Vibrio</taxon>
    </lineage>
</organism>
<protein>
    <recommendedName>
        <fullName evidence="1">Protein translocase subunit SecE</fullName>
    </recommendedName>
</protein>
<keyword id="KW-0997">Cell inner membrane</keyword>
<keyword id="KW-1003">Cell membrane</keyword>
<keyword id="KW-0472">Membrane</keyword>
<keyword id="KW-0653">Protein transport</keyword>
<keyword id="KW-0811">Translocation</keyword>
<keyword id="KW-0812">Transmembrane</keyword>
<keyword id="KW-1133">Transmembrane helix</keyword>
<keyword id="KW-0813">Transport</keyword>
<gene>
    <name evidence="1" type="primary">secE</name>
</gene>
<comment type="function">
    <text evidence="1">Essential subunit of the Sec protein translocation channel SecYEG. Clamps together the 2 halves of SecY. May contact the channel plug during translocation.</text>
</comment>
<comment type="subunit">
    <text evidence="1">Component of the Sec protein translocase complex. Heterotrimer consisting of SecY, SecE and SecG subunits. The heterotrimers can form oligomers, although 1 heterotrimer is thought to be able to translocate proteins. Interacts with the ribosome. Interacts with SecDF, and other proteins may be involved. Interacts with SecA.</text>
</comment>
<comment type="subcellular location">
    <subcellularLocation>
        <location evidence="1">Cell inner membrane</location>
        <topology evidence="1">Multi-pass membrane protein</topology>
    </subcellularLocation>
</comment>
<comment type="similarity">
    <text evidence="1">Belongs to the SecE/SEC61-gamma family.</text>
</comment>
<feature type="chain" id="PRO_0000104192" description="Protein translocase subunit SecE">
    <location>
        <begin position="1"/>
        <end position="126"/>
    </location>
</feature>
<feature type="transmembrane region" description="Helical" evidence="1">
    <location>
        <begin position="20"/>
        <end position="40"/>
    </location>
</feature>
<feature type="transmembrane region" description="Helical" evidence="1">
    <location>
        <begin position="42"/>
        <end position="62"/>
    </location>
</feature>
<feature type="transmembrane region" description="Helical" evidence="1">
    <location>
        <begin position="97"/>
        <end position="117"/>
    </location>
</feature>
<dbReference type="EMBL" id="AB016766">
    <property type="protein sequence ID" value="BAA34065.1"/>
    <property type="molecule type" value="Genomic_DNA"/>
</dbReference>
<dbReference type="PIR" id="JE0331">
    <property type="entry name" value="JE0331"/>
</dbReference>
<dbReference type="RefSeq" id="WP_005397258.1">
    <property type="nucleotide sequence ID" value="NZ_JAUJYY010000026.1"/>
</dbReference>
<dbReference type="STRING" id="663.BAU10_24160"/>
<dbReference type="GeneID" id="57839294"/>
<dbReference type="eggNOG" id="COG0690">
    <property type="taxonomic scope" value="Bacteria"/>
</dbReference>
<dbReference type="GO" id="GO:0005886">
    <property type="term" value="C:plasma membrane"/>
    <property type="evidence" value="ECO:0007669"/>
    <property type="project" value="UniProtKB-SubCell"/>
</dbReference>
<dbReference type="GO" id="GO:0008320">
    <property type="term" value="F:protein transmembrane transporter activity"/>
    <property type="evidence" value="ECO:0007669"/>
    <property type="project" value="UniProtKB-UniRule"/>
</dbReference>
<dbReference type="GO" id="GO:0065002">
    <property type="term" value="P:intracellular protein transmembrane transport"/>
    <property type="evidence" value="ECO:0007669"/>
    <property type="project" value="UniProtKB-UniRule"/>
</dbReference>
<dbReference type="GO" id="GO:0009306">
    <property type="term" value="P:protein secretion"/>
    <property type="evidence" value="ECO:0007669"/>
    <property type="project" value="UniProtKB-UniRule"/>
</dbReference>
<dbReference type="GO" id="GO:0006605">
    <property type="term" value="P:protein targeting"/>
    <property type="evidence" value="ECO:0007669"/>
    <property type="project" value="UniProtKB-UniRule"/>
</dbReference>
<dbReference type="GO" id="GO:0043952">
    <property type="term" value="P:protein transport by the Sec complex"/>
    <property type="evidence" value="ECO:0007669"/>
    <property type="project" value="UniProtKB-UniRule"/>
</dbReference>
<dbReference type="FunFam" id="1.20.5.1030:FF:000001">
    <property type="entry name" value="Preprotein translocase subunit SecE"/>
    <property type="match status" value="1"/>
</dbReference>
<dbReference type="Gene3D" id="1.20.5.1030">
    <property type="entry name" value="Preprotein translocase secy subunit"/>
    <property type="match status" value="1"/>
</dbReference>
<dbReference type="HAMAP" id="MF_00422">
    <property type="entry name" value="SecE"/>
    <property type="match status" value="1"/>
</dbReference>
<dbReference type="InterPro" id="IPR005807">
    <property type="entry name" value="SecE_bac"/>
</dbReference>
<dbReference type="InterPro" id="IPR038379">
    <property type="entry name" value="SecE_sf"/>
</dbReference>
<dbReference type="InterPro" id="IPR001901">
    <property type="entry name" value="Translocase_SecE/Sec61-g"/>
</dbReference>
<dbReference type="NCBIfam" id="NF004372">
    <property type="entry name" value="PRK05740.1-2"/>
    <property type="match status" value="1"/>
</dbReference>
<dbReference type="NCBIfam" id="TIGR00964">
    <property type="entry name" value="secE_bact"/>
    <property type="match status" value="1"/>
</dbReference>
<dbReference type="PANTHER" id="PTHR33910">
    <property type="entry name" value="PROTEIN TRANSLOCASE SUBUNIT SECE"/>
    <property type="match status" value="1"/>
</dbReference>
<dbReference type="PANTHER" id="PTHR33910:SF1">
    <property type="entry name" value="PROTEIN TRANSLOCASE SUBUNIT SECE"/>
    <property type="match status" value="1"/>
</dbReference>
<dbReference type="Pfam" id="PF00584">
    <property type="entry name" value="SecE"/>
    <property type="match status" value="1"/>
</dbReference>
<dbReference type="PRINTS" id="PR01650">
    <property type="entry name" value="SECETRNLCASE"/>
</dbReference>
<dbReference type="PROSITE" id="PS01067">
    <property type="entry name" value="SECE_SEC61G"/>
    <property type="match status" value="1"/>
</dbReference>
<accession>Q9ZNE7</accession>
<reference key="1">
    <citation type="journal article" date="1998" name="Biochem. Biophys. Res. Commun.">
        <title>Molecular cloning and functional characterization of SecE of a marine bacterium, Vibrio alginolyticus.</title>
        <authorList>
            <person name="Nishiyama K."/>
            <person name="Furuta M."/>
            <person name="Tokuda H."/>
        </authorList>
    </citation>
    <scope>NUCLEOTIDE SEQUENCE [GENOMIC DNA]</scope>
</reference>
<sequence length="126" mass="13182">MKANNAETPDSSNAADTFKWLAAFVLAAAAVVGNYLYGEMSVVVRAAGVVVLIAAALGVAATTTKGKAAISFAKESRMEVRKVVWPTRQETMQTTLIVLAVSIVMALVLWGIDGIMVRLVALATGV</sequence>
<evidence type="ECO:0000255" key="1">
    <source>
        <dbReference type="HAMAP-Rule" id="MF_00422"/>
    </source>
</evidence>
<proteinExistence type="inferred from homology"/>
<name>SECE_VIBAL</name>